<dbReference type="EC" id="3.1.21.2" evidence="1"/>
<dbReference type="EMBL" id="CP001071">
    <property type="protein sequence ID" value="ACD04678.1"/>
    <property type="molecule type" value="Genomic_DNA"/>
</dbReference>
<dbReference type="RefSeq" id="WP_012419893.1">
    <property type="nucleotide sequence ID" value="NZ_CP071807.1"/>
</dbReference>
<dbReference type="SMR" id="B2UQE3"/>
<dbReference type="STRING" id="349741.Amuc_0845"/>
<dbReference type="PaxDb" id="349741-Amuc_0845"/>
<dbReference type="KEGG" id="amu:Amuc_0845"/>
<dbReference type="eggNOG" id="COG0648">
    <property type="taxonomic scope" value="Bacteria"/>
</dbReference>
<dbReference type="HOGENOM" id="CLU_025885_4_1_0"/>
<dbReference type="OrthoDB" id="9805666at2"/>
<dbReference type="BioCyc" id="AMUC349741:G1GBX-916-MONOMER"/>
<dbReference type="Proteomes" id="UP000001031">
    <property type="component" value="Chromosome"/>
</dbReference>
<dbReference type="GO" id="GO:0008833">
    <property type="term" value="F:deoxyribonuclease IV (phage-T4-induced) activity"/>
    <property type="evidence" value="ECO:0007669"/>
    <property type="project" value="UniProtKB-UniRule"/>
</dbReference>
<dbReference type="GO" id="GO:0003677">
    <property type="term" value="F:DNA binding"/>
    <property type="evidence" value="ECO:0007669"/>
    <property type="project" value="InterPro"/>
</dbReference>
<dbReference type="GO" id="GO:0003906">
    <property type="term" value="F:DNA-(apurinic or apyrimidinic site) endonuclease activity"/>
    <property type="evidence" value="ECO:0007669"/>
    <property type="project" value="TreeGrafter"/>
</dbReference>
<dbReference type="GO" id="GO:0008081">
    <property type="term" value="F:phosphoric diester hydrolase activity"/>
    <property type="evidence" value="ECO:0007669"/>
    <property type="project" value="TreeGrafter"/>
</dbReference>
<dbReference type="GO" id="GO:0008270">
    <property type="term" value="F:zinc ion binding"/>
    <property type="evidence" value="ECO:0007669"/>
    <property type="project" value="UniProtKB-UniRule"/>
</dbReference>
<dbReference type="GO" id="GO:0006284">
    <property type="term" value="P:base-excision repair"/>
    <property type="evidence" value="ECO:0007669"/>
    <property type="project" value="TreeGrafter"/>
</dbReference>
<dbReference type="CDD" id="cd00019">
    <property type="entry name" value="AP2Ec"/>
    <property type="match status" value="1"/>
</dbReference>
<dbReference type="FunFam" id="3.20.20.150:FF:000001">
    <property type="entry name" value="Probable endonuclease 4"/>
    <property type="match status" value="1"/>
</dbReference>
<dbReference type="Gene3D" id="3.20.20.150">
    <property type="entry name" value="Divalent-metal-dependent TIM barrel enzymes"/>
    <property type="match status" value="1"/>
</dbReference>
<dbReference type="HAMAP" id="MF_00152">
    <property type="entry name" value="Nfo"/>
    <property type="match status" value="1"/>
</dbReference>
<dbReference type="InterPro" id="IPR001719">
    <property type="entry name" value="AP_endonuc_2"/>
</dbReference>
<dbReference type="InterPro" id="IPR018246">
    <property type="entry name" value="AP_endonuc_F2_Zn_BS"/>
</dbReference>
<dbReference type="InterPro" id="IPR036237">
    <property type="entry name" value="Xyl_isomerase-like_sf"/>
</dbReference>
<dbReference type="InterPro" id="IPR013022">
    <property type="entry name" value="Xyl_isomerase-like_TIM-brl"/>
</dbReference>
<dbReference type="NCBIfam" id="TIGR00587">
    <property type="entry name" value="nfo"/>
    <property type="match status" value="1"/>
</dbReference>
<dbReference type="PANTHER" id="PTHR21445:SF0">
    <property type="entry name" value="APURINIC-APYRIMIDINIC ENDONUCLEASE"/>
    <property type="match status" value="1"/>
</dbReference>
<dbReference type="PANTHER" id="PTHR21445">
    <property type="entry name" value="ENDONUCLEASE IV ENDODEOXYRIBONUCLEASE IV"/>
    <property type="match status" value="1"/>
</dbReference>
<dbReference type="Pfam" id="PF01261">
    <property type="entry name" value="AP_endonuc_2"/>
    <property type="match status" value="1"/>
</dbReference>
<dbReference type="SMART" id="SM00518">
    <property type="entry name" value="AP2Ec"/>
    <property type="match status" value="1"/>
</dbReference>
<dbReference type="SUPFAM" id="SSF51658">
    <property type="entry name" value="Xylose isomerase-like"/>
    <property type="match status" value="1"/>
</dbReference>
<dbReference type="PROSITE" id="PS00730">
    <property type="entry name" value="AP_NUCLEASE_F2_2"/>
    <property type="match status" value="1"/>
</dbReference>
<dbReference type="PROSITE" id="PS51432">
    <property type="entry name" value="AP_NUCLEASE_F2_4"/>
    <property type="match status" value="1"/>
</dbReference>
<accession>B2UQE3</accession>
<name>END4_AKKM8</name>
<proteinExistence type="inferred from homology"/>
<gene>
    <name evidence="1" type="primary">nfo</name>
    <name type="ordered locus">Amuc_0845</name>
</gene>
<sequence>MPYIGCHLSSAKGYEAMGRVALSIGANTFQFFTRNPRGSKAKAIDEQDIARFLELARNNGFGTLLAHAPYTLNPCSADPSVARFAAQVLKEDLELMEHLPGNLYNFHPGCHVGQGVEKGIELVADQLNDVLSPEQKTIVLLETMSGKGSEVGRTFEELAAIMERVDLKDKLGVCLDTCHVYSAGYDIVNRLDSVLEHFDAVLGLERLRAIHLNDSMTPFSSFKDRHETIGKGSLGEQAFINIINHPVLRELPFFLETPRDDAGHGEEITWLKEHYRN</sequence>
<feature type="chain" id="PRO_1000096867" description="Probable endonuclease 4">
    <location>
        <begin position="1"/>
        <end position="277"/>
    </location>
</feature>
<feature type="binding site" evidence="1">
    <location>
        <position position="67"/>
    </location>
    <ligand>
        <name>Zn(2+)</name>
        <dbReference type="ChEBI" id="CHEBI:29105"/>
        <label>1</label>
    </ligand>
</feature>
<feature type="binding site" evidence="1">
    <location>
        <position position="107"/>
    </location>
    <ligand>
        <name>Zn(2+)</name>
        <dbReference type="ChEBI" id="CHEBI:29105"/>
        <label>1</label>
    </ligand>
</feature>
<feature type="binding site" evidence="1">
    <location>
        <position position="142"/>
    </location>
    <ligand>
        <name>Zn(2+)</name>
        <dbReference type="ChEBI" id="CHEBI:29105"/>
        <label>1</label>
    </ligand>
</feature>
<feature type="binding site" evidence="1">
    <location>
        <position position="142"/>
    </location>
    <ligand>
        <name>Zn(2+)</name>
        <dbReference type="ChEBI" id="CHEBI:29105"/>
        <label>2</label>
    </ligand>
</feature>
<feature type="binding site" evidence="1">
    <location>
        <position position="176"/>
    </location>
    <ligand>
        <name>Zn(2+)</name>
        <dbReference type="ChEBI" id="CHEBI:29105"/>
        <label>2</label>
    </ligand>
</feature>
<feature type="binding site" evidence="1">
    <location>
        <position position="179"/>
    </location>
    <ligand>
        <name>Zn(2+)</name>
        <dbReference type="ChEBI" id="CHEBI:29105"/>
        <label>3</label>
    </ligand>
</feature>
<feature type="binding site" evidence="1">
    <location>
        <position position="211"/>
    </location>
    <ligand>
        <name>Zn(2+)</name>
        <dbReference type="ChEBI" id="CHEBI:29105"/>
        <label>2</label>
    </ligand>
</feature>
<feature type="binding site" evidence="1">
    <location>
        <position position="224"/>
    </location>
    <ligand>
        <name>Zn(2+)</name>
        <dbReference type="ChEBI" id="CHEBI:29105"/>
        <label>3</label>
    </ligand>
</feature>
<feature type="binding site" evidence="1">
    <location>
        <position position="226"/>
    </location>
    <ligand>
        <name>Zn(2+)</name>
        <dbReference type="ChEBI" id="CHEBI:29105"/>
        <label>3</label>
    </ligand>
</feature>
<feature type="binding site" evidence="1">
    <location>
        <position position="256"/>
    </location>
    <ligand>
        <name>Zn(2+)</name>
        <dbReference type="ChEBI" id="CHEBI:29105"/>
        <label>2</label>
    </ligand>
</feature>
<evidence type="ECO:0000255" key="1">
    <source>
        <dbReference type="HAMAP-Rule" id="MF_00152"/>
    </source>
</evidence>
<protein>
    <recommendedName>
        <fullName evidence="1">Probable endonuclease 4</fullName>
        <ecNumber evidence="1">3.1.21.2</ecNumber>
    </recommendedName>
    <alternativeName>
        <fullName evidence="1">Endodeoxyribonuclease IV</fullName>
    </alternativeName>
    <alternativeName>
        <fullName evidence="1">Endonuclease IV</fullName>
    </alternativeName>
</protein>
<keyword id="KW-0227">DNA damage</keyword>
<keyword id="KW-0234">DNA repair</keyword>
<keyword id="KW-0255">Endonuclease</keyword>
<keyword id="KW-0378">Hydrolase</keyword>
<keyword id="KW-0479">Metal-binding</keyword>
<keyword id="KW-0540">Nuclease</keyword>
<keyword id="KW-1185">Reference proteome</keyword>
<keyword id="KW-0862">Zinc</keyword>
<reference key="1">
    <citation type="journal article" date="2011" name="PLoS ONE">
        <title>The genome of Akkermansia muciniphila, a dedicated intestinal mucin degrader, and its use in exploring intestinal metagenomes.</title>
        <authorList>
            <person name="van Passel M.W."/>
            <person name="Kant R."/>
            <person name="Zoetendal E.G."/>
            <person name="Plugge C.M."/>
            <person name="Derrien M."/>
            <person name="Malfatti S.A."/>
            <person name="Chain P.S."/>
            <person name="Woyke T."/>
            <person name="Palva A."/>
            <person name="de Vos W.M."/>
            <person name="Smidt H."/>
        </authorList>
    </citation>
    <scope>NUCLEOTIDE SEQUENCE [LARGE SCALE GENOMIC DNA]</scope>
    <source>
        <strain>ATCC BAA-835 / DSM 22959 / JCM 33894 / BCRC 81048 / CCUG 64013 / CIP 107961 / Muc</strain>
    </source>
</reference>
<organism>
    <name type="scientific">Akkermansia muciniphila (strain ATCC BAA-835 / DSM 22959 / JCM 33894 / BCRC 81048 / CCUG 64013 / CIP 107961 / Muc)</name>
    <dbReference type="NCBI Taxonomy" id="349741"/>
    <lineage>
        <taxon>Bacteria</taxon>
        <taxon>Pseudomonadati</taxon>
        <taxon>Verrucomicrobiota</taxon>
        <taxon>Verrucomicrobiia</taxon>
        <taxon>Verrucomicrobiales</taxon>
        <taxon>Akkermansiaceae</taxon>
        <taxon>Akkermansia</taxon>
    </lineage>
</organism>
<comment type="function">
    <text evidence="1">Endonuclease IV plays a role in DNA repair. It cleaves phosphodiester bonds at apurinic or apyrimidinic (AP) sites, generating a 3'-hydroxyl group and a 5'-terminal sugar phosphate.</text>
</comment>
<comment type="catalytic activity">
    <reaction evidence="1">
        <text>Endonucleolytic cleavage to 5'-phosphooligonucleotide end-products.</text>
        <dbReference type="EC" id="3.1.21.2"/>
    </reaction>
</comment>
<comment type="cofactor">
    <cofactor evidence="1">
        <name>Zn(2+)</name>
        <dbReference type="ChEBI" id="CHEBI:29105"/>
    </cofactor>
    <text evidence="1">Binds 3 Zn(2+) ions.</text>
</comment>
<comment type="similarity">
    <text evidence="1">Belongs to the AP endonuclease 2 family.</text>
</comment>